<protein>
    <recommendedName>
        <fullName evidence="1">Translational regulator CsrA</fullName>
    </recommendedName>
    <alternativeName>
        <fullName evidence="1">Carbon storage regulator</fullName>
    </alternativeName>
</protein>
<feature type="chain" id="PRO_1000023364" description="Translational regulator CsrA">
    <location>
        <begin position="1"/>
        <end position="61"/>
    </location>
</feature>
<dbReference type="EMBL" id="CP000016">
    <property type="protein sequence ID" value="AAZ40815.1"/>
    <property type="molecule type" value="Genomic_DNA"/>
</dbReference>
<dbReference type="RefSeq" id="WP_011282722.1">
    <property type="nucleotide sequence ID" value="NC_007292.1"/>
</dbReference>
<dbReference type="SMR" id="Q493M5"/>
<dbReference type="STRING" id="291272.BPEN_175"/>
<dbReference type="KEGG" id="bpn:BPEN_175"/>
<dbReference type="eggNOG" id="COG1551">
    <property type="taxonomic scope" value="Bacteria"/>
</dbReference>
<dbReference type="HOGENOM" id="CLU_164837_2_1_6"/>
<dbReference type="OrthoDB" id="9809061at2"/>
<dbReference type="Proteomes" id="UP000007794">
    <property type="component" value="Chromosome"/>
</dbReference>
<dbReference type="GO" id="GO:0005829">
    <property type="term" value="C:cytosol"/>
    <property type="evidence" value="ECO:0007669"/>
    <property type="project" value="TreeGrafter"/>
</dbReference>
<dbReference type="GO" id="GO:0048027">
    <property type="term" value="F:mRNA 5'-UTR binding"/>
    <property type="evidence" value="ECO:0007669"/>
    <property type="project" value="UniProtKB-UniRule"/>
</dbReference>
<dbReference type="GO" id="GO:0006402">
    <property type="term" value="P:mRNA catabolic process"/>
    <property type="evidence" value="ECO:0007669"/>
    <property type="project" value="InterPro"/>
</dbReference>
<dbReference type="GO" id="GO:0045947">
    <property type="term" value="P:negative regulation of translational initiation"/>
    <property type="evidence" value="ECO:0007669"/>
    <property type="project" value="UniProtKB-UniRule"/>
</dbReference>
<dbReference type="GO" id="GO:0045948">
    <property type="term" value="P:positive regulation of translational initiation"/>
    <property type="evidence" value="ECO:0007669"/>
    <property type="project" value="UniProtKB-UniRule"/>
</dbReference>
<dbReference type="GO" id="GO:0006109">
    <property type="term" value="P:regulation of carbohydrate metabolic process"/>
    <property type="evidence" value="ECO:0007669"/>
    <property type="project" value="UniProtKB-UniRule"/>
</dbReference>
<dbReference type="FunFam" id="2.60.40.4380:FF:000001">
    <property type="entry name" value="Translational regulator CsrA"/>
    <property type="match status" value="1"/>
</dbReference>
<dbReference type="Gene3D" id="2.60.40.4380">
    <property type="entry name" value="Translational regulator CsrA"/>
    <property type="match status" value="1"/>
</dbReference>
<dbReference type="HAMAP" id="MF_00167">
    <property type="entry name" value="CsrA"/>
    <property type="match status" value="1"/>
</dbReference>
<dbReference type="InterPro" id="IPR003751">
    <property type="entry name" value="CsrA"/>
</dbReference>
<dbReference type="InterPro" id="IPR036107">
    <property type="entry name" value="CsrA_sf"/>
</dbReference>
<dbReference type="NCBIfam" id="TIGR00202">
    <property type="entry name" value="csrA"/>
    <property type="match status" value="1"/>
</dbReference>
<dbReference type="NCBIfam" id="NF002469">
    <property type="entry name" value="PRK01712.1"/>
    <property type="match status" value="1"/>
</dbReference>
<dbReference type="PANTHER" id="PTHR34984">
    <property type="entry name" value="CARBON STORAGE REGULATOR"/>
    <property type="match status" value="1"/>
</dbReference>
<dbReference type="PANTHER" id="PTHR34984:SF1">
    <property type="entry name" value="CARBON STORAGE REGULATOR"/>
    <property type="match status" value="1"/>
</dbReference>
<dbReference type="Pfam" id="PF02599">
    <property type="entry name" value="CsrA"/>
    <property type="match status" value="1"/>
</dbReference>
<dbReference type="SUPFAM" id="SSF117130">
    <property type="entry name" value="CsrA-like"/>
    <property type="match status" value="1"/>
</dbReference>
<comment type="function">
    <text evidence="1">A key translational regulator that binds mRNA to regulate translation initiation and/or mRNA stability. Mediates global changes in gene expression, shifting from rapid growth to stress survival by linking envelope stress, the stringent response and the catabolite repression systems. Usually binds in the 5'-UTR; binding at or near the Shine-Dalgarno sequence prevents ribosome-binding, repressing translation, binding elsewhere in the 5'-UTR can activate translation and/or stabilize the mRNA. Its function is antagonized by small RNA(s).</text>
</comment>
<comment type="subunit">
    <text evidence="1">Homodimer; the beta-strands of each monomer intercalate to form a hydrophobic core, while the alpha-helices form wings that extend away from the core.</text>
</comment>
<comment type="subcellular location">
    <subcellularLocation>
        <location evidence="1">Cytoplasm</location>
    </subcellularLocation>
</comment>
<comment type="similarity">
    <text evidence="1">Belongs to the CsrA/RsmA family.</text>
</comment>
<accession>Q493M5</accession>
<name>CSRA_BLOPB</name>
<evidence type="ECO:0000255" key="1">
    <source>
        <dbReference type="HAMAP-Rule" id="MF_00167"/>
    </source>
</evidence>
<organism>
    <name type="scientific">Blochmanniella pennsylvanica (strain BPEN)</name>
    <dbReference type="NCBI Taxonomy" id="291272"/>
    <lineage>
        <taxon>Bacteria</taxon>
        <taxon>Pseudomonadati</taxon>
        <taxon>Pseudomonadota</taxon>
        <taxon>Gammaproteobacteria</taxon>
        <taxon>Enterobacterales</taxon>
        <taxon>Enterobacteriaceae</taxon>
        <taxon>ant endosymbionts</taxon>
        <taxon>Candidatus Blochmanniella</taxon>
    </lineage>
</organism>
<proteinExistence type="inferred from homology"/>
<reference key="1">
    <citation type="journal article" date="2005" name="Genome Res.">
        <title>Genome sequence of Blochmannia pennsylvanicus indicates parallel evolutionary trends among bacterial mutualists of insects.</title>
        <authorList>
            <person name="Degnan P.H."/>
            <person name="Lazarus A.B."/>
            <person name="Wernegreen J.J."/>
        </authorList>
    </citation>
    <scope>NUCLEOTIDE SEQUENCE [LARGE SCALE GENOMIC DNA]</scope>
    <source>
        <strain>BPEN</strain>
    </source>
</reference>
<sequence length="61" mass="6875">MLILTRRVGETLVIGDEVTVTVLGIKGNQVRIGVNAPKEISIHREEIYQRIKSEKSQQNLC</sequence>
<gene>
    <name evidence="1" type="primary">csrA</name>
    <name type="ordered locus">BPEN_175</name>
</gene>
<keyword id="KW-0010">Activator</keyword>
<keyword id="KW-0963">Cytoplasm</keyword>
<keyword id="KW-1185">Reference proteome</keyword>
<keyword id="KW-0678">Repressor</keyword>
<keyword id="KW-0694">RNA-binding</keyword>
<keyword id="KW-0810">Translation regulation</keyword>